<protein>
    <recommendedName>
        <fullName evidence="1">UPF0758 protein YicR</fullName>
    </recommendedName>
</protein>
<dbReference type="EMBL" id="CU928162">
    <property type="protein sequence ID" value="CAR10450.2"/>
    <property type="molecule type" value="Genomic_DNA"/>
</dbReference>
<dbReference type="SMR" id="B7N279"/>
<dbReference type="KEGG" id="ecq:ECED1_4322"/>
<dbReference type="HOGENOM" id="CLU_073529_0_1_6"/>
<dbReference type="Proteomes" id="UP000000748">
    <property type="component" value="Chromosome"/>
</dbReference>
<dbReference type="GO" id="GO:0046872">
    <property type="term" value="F:metal ion binding"/>
    <property type="evidence" value="ECO:0007669"/>
    <property type="project" value="UniProtKB-KW"/>
</dbReference>
<dbReference type="GO" id="GO:0008237">
    <property type="term" value="F:metallopeptidase activity"/>
    <property type="evidence" value="ECO:0007669"/>
    <property type="project" value="UniProtKB-KW"/>
</dbReference>
<dbReference type="GO" id="GO:0006508">
    <property type="term" value="P:proteolysis"/>
    <property type="evidence" value="ECO:0007669"/>
    <property type="project" value="UniProtKB-KW"/>
</dbReference>
<dbReference type="CDD" id="cd08071">
    <property type="entry name" value="MPN_DUF2466"/>
    <property type="match status" value="1"/>
</dbReference>
<dbReference type="Gene3D" id="3.40.140.10">
    <property type="entry name" value="Cytidine Deaminase, domain 2"/>
    <property type="match status" value="1"/>
</dbReference>
<dbReference type="HAMAP" id="MF_00018">
    <property type="entry name" value="UPF0758_YicR"/>
    <property type="match status" value="1"/>
</dbReference>
<dbReference type="InterPro" id="IPR037518">
    <property type="entry name" value="MPN"/>
</dbReference>
<dbReference type="InterPro" id="IPR025657">
    <property type="entry name" value="RadC_JAB"/>
</dbReference>
<dbReference type="InterPro" id="IPR010994">
    <property type="entry name" value="RuvA_2-like"/>
</dbReference>
<dbReference type="InterPro" id="IPR001405">
    <property type="entry name" value="UPF0758"/>
</dbReference>
<dbReference type="InterPro" id="IPR020891">
    <property type="entry name" value="UPF0758_CS"/>
</dbReference>
<dbReference type="InterPro" id="IPR046778">
    <property type="entry name" value="UPF0758_N"/>
</dbReference>
<dbReference type="InterPro" id="IPR022820">
    <property type="entry name" value="UPF0758_YicR"/>
</dbReference>
<dbReference type="NCBIfam" id="NF000642">
    <property type="entry name" value="PRK00024.1"/>
    <property type="match status" value="1"/>
</dbReference>
<dbReference type="NCBIfam" id="TIGR00608">
    <property type="entry name" value="radc"/>
    <property type="match status" value="1"/>
</dbReference>
<dbReference type="PANTHER" id="PTHR30471">
    <property type="entry name" value="DNA REPAIR PROTEIN RADC"/>
    <property type="match status" value="1"/>
</dbReference>
<dbReference type="PANTHER" id="PTHR30471:SF3">
    <property type="entry name" value="UPF0758 PROTEIN YEES-RELATED"/>
    <property type="match status" value="1"/>
</dbReference>
<dbReference type="Pfam" id="PF04002">
    <property type="entry name" value="RadC"/>
    <property type="match status" value="1"/>
</dbReference>
<dbReference type="Pfam" id="PF20582">
    <property type="entry name" value="UPF0758_N"/>
    <property type="match status" value="1"/>
</dbReference>
<dbReference type="SUPFAM" id="SSF47781">
    <property type="entry name" value="RuvA domain 2-like"/>
    <property type="match status" value="1"/>
</dbReference>
<dbReference type="PROSITE" id="PS50249">
    <property type="entry name" value="MPN"/>
    <property type="match status" value="1"/>
</dbReference>
<dbReference type="PROSITE" id="PS01302">
    <property type="entry name" value="UPF0758"/>
    <property type="match status" value="1"/>
</dbReference>
<keyword id="KW-0378">Hydrolase</keyword>
<keyword id="KW-0479">Metal-binding</keyword>
<keyword id="KW-0482">Metalloprotease</keyword>
<keyword id="KW-0645">Protease</keyword>
<keyword id="KW-0862">Zinc</keyword>
<proteinExistence type="inferred from homology"/>
<evidence type="ECO:0000255" key="1">
    <source>
        <dbReference type="HAMAP-Rule" id="MF_00018"/>
    </source>
</evidence>
<evidence type="ECO:0000255" key="2">
    <source>
        <dbReference type="PROSITE-ProRule" id="PRU01182"/>
    </source>
</evidence>
<sequence>MKNNVQLLMPREKMLKFGISALTDVELLALFLRTGTRGKDVLTLAKEMLENFGSLYGLLTSEYEQFSGVHGIGVAKFAQLKGIAELARRYYNVRMREESPLLSPEMTREFLQSQLTGEEREIFMVIFLDSQHRVITHSRLFSGTLNHVEVHPREIIREAIKINASALILAHNHPSGCAEPSKADKLITERIIKSCQFMDLRVLDHIVIGRGEYVSFAERGWI</sequence>
<name>YICR_ECO81</name>
<feature type="chain" id="PRO_1000195297" description="UPF0758 protein YicR">
    <location>
        <begin position="1"/>
        <end position="222"/>
    </location>
</feature>
<feature type="domain" description="MPN" evidence="2">
    <location>
        <begin position="100"/>
        <end position="222"/>
    </location>
</feature>
<feature type="short sequence motif" description="JAMM motif" evidence="2">
    <location>
        <begin position="171"/>
        <end position="184"/>
    </location>
</feature>
<feature type="binding site" evidence="2">
    <location>
        <position position="171"/>
    </location>
    <ligand>
        <name>Zn(2+)</name>
        <dbReference type="ChEBI" id="CHEBI:29105"/>
        <note>catalytic</note>
    </ligand>
</feature>
<feature type="binding site" evidence="2">
    <location>
        <position position="173"/>
    </location>
    <ligand>
        <name>Zn(2+)</name>
        <dbReference type="ChEBI" id="CHEBI:29105"/>
        <note>catalytic</note>
    </ligand>
</feature>
<feature type="binding site" evidence="2">
    <location>
        <position position="184"/>
    </location>
    <ligand>
        <name>Zn(2+)</name>
        <dbReference type="ChEBI" id="CHEBI:29105"/>
        <note>catalytic</note>
    </ligand>
</feature>
<comment type="similarity">
    <text evidence="1">Belongs to the UPF0758 family. YicR subfamily.</text>
</comment>
<gene>
    <name evidence="1" type="primary">yicR</name>
    <name type="ordered locus">ECED1_4322</name>
</gene>
<accession>B7N279</accession>
<reference key="1">
    <citation type="journal article" date="2009" name="PLoS Genet.">
        <title>Organised genome dynamics in the Escherichia coli species results in highly diverse adaptive paths.</title>
        <authorList>
            <person name="Touchon M."/>
            <person name="Hoede C."/>
            <person name="Tenaillon O."/>
            <person name="Barbe V."/>
            <person name="Baeriswyl S."/>
            <person name="Bidet P."/>
            <person name="Bingen E."/>
            <person name="Bonacorsi S."/>
            <person name="Bouchier C."/>
            <person name="Bouvet O."/>
            <person name="Calteau A."/>
            <person name="Chiapello H."/>
            <person name="Clermont O."/>
            <person name="Cruveiller S."/>
            <person name="Danchin A."/>
            <person name="Diard M."/>
            <person name="Dossat C."/>
            <person name="Karoui M.E."/>
            <person name="Frapy E."/>
            <person name="Garry L."/>
            <person name="Ghigo J.M."/>
            <person name="Gilles A.M."/>
            <person name="Johnson J."/>
            <person name="Le Bouguenec C."/>
            <person name="Lescat M."/>
            <person name="Mangenot S."/>
            <person name="Martinez-Jehanne V."/>
            <person name="Matic I."/>
            <person name="Nassif X."/>
            <person name="Oztas S."/>
            <person name="Petit M.A."/>
            <person name="Pichon C."/>
            <person name="Rouy Z."/>
            <person name="Ruf C.S."/>
            <person name="Schneider D."/>
            <person name="Tourret J."/>
            <person name="Vacherie B."/>
            <person name="Vallenet D."/>
            <person name="Medigue C."/>
            <person name="Rocha E.P.C."/>
            <person name="Denamur E."/>
        </authorList>
    </citation>
    <scope>NUCLEOTIDE SEQUENCE [LARGE SCALE GENOMIC DNA]</scope>
    <source>
        <strain>ED1a</strain>
    </source>
</reference>
<organism>
    <name type="scientific">Escherichia coli O81 (strain ED1a)</name>
    <dbReference type="NCBI Taxonomy" id="585397"/>
    <lineage>
        <taxon>Bacteria</taxon>
        <taxon>Pseudomonadati</taxon>
        <taxon>Pseudomonadota</taxon>
        <taxon>Gammaproteobacteria</taxon>
        <taxon>Enterobacterales</taxon>
        <taxon>Enterobacteriaceae</taxon>
        <taxon>Escherichia</taxon>
    </lineage>
</organism>